<proteinExistence type="inferred from homology"/>
<reference key="1">
    <citation type="journal article" date="2006" name="Mol. Biol. Evol.">
        <title>The chloroplast genome sequence of Chara vulgaris sheds new light into the closest green algal relatives of land plants.</title>
        <authorList>
            <person name="Turmel M."/>
            <person name="Otis C."/>
            <person name="Lemieux C."/>
        </authorList>
    </citation>
    <scope>NUCLEOTIDE SEQUENCE [LARGE SCALE GENOMIC DNA]</scope>
</reference>
<gene>
    <name evidence="2" type="primary">psbD</name>
</gene>
<sequence length="353" mass="39478">MTIAIGKSSEEPKGIFDTMDDWLRRDRFVFVGWSGLLLFPCAYFSLGGWLTGTTFVTSWYTHGLASSYLEGCNFLTAAVSTPANSMAHSLLLLWGPEAQGDFTRWCQLGGLWTFIALHGAFALIGFMLRQFELARSVQLRPYNAIAFSGPISVFVSVFLIYPLGQSGWFFAPSFGVAAIFRFILFFQGFHNWTLNPFHMMGVAGVLGAALLCAIHGATVENTLFEDGDGANTFRAFNPTQSEETYSMVTANRFWSQIFGIAFSNKRWLHFFMLFVPVTGLWMSAIGVVGLALNLRAYDFVSQEIRASEDPEFETFYTKNILLNEGIRAWMAAQDQPHENLVFPEEVLPRGNAL</sequence>
<evidence type="ECO:0000250" key="1">
    <source>
        <dbReference type="UniProtKB" id="P56761"/>
    </source>
</evidence>
<evidence type="ECO:0000255" key="2">
    <source>
        <dbReference type="HAMAP-Rule" id="MF_01383"/>
    </source>
</evidence>
<feature type="initiator methionine" description="Removed" evidence="1">
    <location>
        <position position="1"/>
    </location>
</feature>
<feature type="chain" id="PRO_0000359632" description="Photosystem II D2 protein">
    <location>
        <begin position="2"/>
        <end position="353"/>
    </location>
</feature>
<feature type="transmembrane region" description="Helical" evidence="2">
    <location>
        <begin position="41"/>
        <end position="61"/>
    </location>
</feature>
<feature type="transmembrane region" description="Helical" evidence="2">
    <location>
        <begin position="125"/>
        <end position="141"/>
    </location>
</feature>
<feature type="transmembrane region" description="Helical" evidence="2">
    <location>
        <begin position="153"/>
        <end position="166"/>
    </location>
</feature>
<feature type="transmembrane region" description="Helical" evidence="2">
    <location>
        <begin position="208"/>
        <end position="228"/>
    </location>
</feature>
<feature type="transmembrane region" description="Helical" evidence="2">
    <location>
        <begin position="279"/>
        <end position="295"/>
    </location>
</feature>
<feature type="binding site" description="axial binding residue" evidence="2">
    <location>
        <position position="118"/>
    </location>
    <ligand>
        <name>chlorophyll a</name>
        <dbReference type="ChEBI" id="CHEBI:58416"/>
        <label>ChlzD2</label>
    </ligand>
    <ligandPart>
        <name>Mg</name>
        <dbReference type="ChEBI" id="CHEBI:25107"/>
    </ligandPart>
</feature>
<feature type="binding site" evidence="2">
    <location>
        <position position="130"/>
    </location>
    <ligand>
        <name>pheophytin a</name>
        <dbReference type="ChEBI" id="CHEBI:136840"/>
        <label>D2</label>
    </ligand>
</feature>
<feature type="binding site" evidence="2">
    <location>
        <position position="143"/>
    </location>
    <ligand>
        <name>pheophytin a</name>
        <dbReference type="ChEBI" id="CHEBI:136840"/>
        <label>D2</label>
    </ligand>
</feature>
<feature type="binding site" description="axial binding residue" evidence="2">
    <location>
        <position position="198"/>
    </location>
    <ligand>
        <name>chlorophyll a</name>
        <dbReference type="ChEBI" id="CHEBI:58416"/>
        <label>PD2</label>
    </ligand>
    <ligandPart>
        <name>Mg</name>
        <dbReference type="ChEBI" id="CHEBI:25107"/>
    </ligandPart>
</feature>
<feature type="binding site" evidence="2">
    <location>
        <position position="215"/>
    </location>
    <ligand>
        <name>a plastoquinone</name>
        <dbReference type="ChEBI" id="CHEBI:17757"/>
        <label>Q(A)</label>
    </ligand>
</feature>
<feature type="binding site" evidence="2">
    <location>
        <position position="215"/>
    </location>
    <ligand>
        <name>Fe cation</name>
        <dbReference type="ChEBI" id="CHEBI:24875"/>
        <note>ligand shared with heterodimeric partner</note>
    </ligand>
</feature>
<feature type="binding site" evidence="2">
    <location>
        <position position="262"/>
    </location>
    <ligand>
        <name>a plastoquinone</name>
        <dbReference type="ChEBI" id="CHEBI:17757"/>
        <label>Q(A)</label>
    </ligand>
</feature>
<feature type="binding site" evidence="2">
    <location>
        <position position="269"/>
    </location>
    <ligand>
        <name>Fe cation</name>
        <dbReference type="ChEBI" id="CHEBI:24875"/>
        <note>ligand shared with heterodimeric partner</note>
    </ligand>
</feature>
<feature type="modified residue" description="N-acetylthreonine" evidence="1">
    <location>
        <position position="2"/>
    </location>
</feature>
<feature type="modified residue" description="Phosphothreonine" evidence="1">
    <location>
        <position position="2"/>
    </location>
</feature>
<name>PSBD_CHAVU</name>
<comment type="function">
    <text evidence="2">Photosystem II (PSII) is a light-driven water:plastoquinone oxidoreductase that uses light energy to abstract electrons from H(2)O, generating O(2) and a proton gradient subsequently used for ATP formation. It consists of a core antenna complex that captures photons, and an electron transfer chain that converts photonic excitation into a charge separation. The D1/D2 (PsbA/PsbD) reaction center heterodimer binds P680, the primary electron donor of PSII as well as several subsequent electron acceptors. D2 is needed for assembly of a stable PSII complex.</text>
</comment>
<comment type="catalytic activity">
    <reaction evidence="2">
        <text>2 a plastoquinone + 4 hnu + 2 H2O = 2 a plastoquinol + O2</text>
        <dbReference type="Rhea" id="RHEA:36359"/>
        <dbReference type="Rhea" id="RHEA-COMP:9561"/>
        <dbReference type="Rhea" id="RHEA-COMP:9562"/>
        <dbReference type="ChEBI" id="CHEBI:15377"/>
        <dbReference type="ChEBI" id="CHEBI:15379"/>
        <dbReference type="ChEBI" id="CHEBI:17757"/>
        <dbReference type="ChEBI" id="CHEBI:30212"/>
        <dbReference type="ChEBI" id="CHEBI:62192"/>
        <dbReference type="EC" id="1.10.3.9"/>
    </reaction>
</comment>
<comment type="cofactor">
    <text evidence="2">The D1/D2 heterodimer binds P680, chlorophylls that are the primary electron donor of PSII, and subsequent electron acceptors. It shares a non-heme iron and each subunit binds pheophytin, quinone, additional chlorophylls, carotenoids and lipids. There is also a Cl(-1) ion associated with D1 and D2, which is required for oxygen evolution. The PSII complex binds additional chlorophylls, carotenoids and specific lipids.</text>
</comment>
<comment type="subunit">
    <text evidence="2">PSII is composed of 1 copy each of membrane proteins PsbA, PsbB, PsbC, PsbD, PsbE, PsbF, PsbH, PsbI, PsbJ, PsbK, PsbL, PsbM, PsbT, PsbX, PsbY, PsbZ, Psb30/Ycf12, at least 3 peripheral proteins of the oxygen-evolving complex and a large number of cofactors. It forms dimeric complexes.</text>
</comment>
<comment type="subcellular location">
    <subcellularLocation>
        <location evidence="2">Plastid</location>
        <location evidence="2">Chloroplast thylakoid membrane</location>
        <topology evidence="2">Multi-pass membrane protein</topology>
    </subcellularLocation>
</comment>
<comment type="miscellaneous">
    <text evidence="2">2 of the reaction center chlorophylls (ChlD1 and ChlD2) are entirely coordinated by water.</text>
</comment>
<comment type="similarity">
    <text evidence="2">Belongs to the reaction center PufL/M/PsbA/D family.</text>
</comment>
<dbReference type="EC" id="1.10.3.9" evidence="2"/>
<dbReference type="EMBL" id="DQ229107">
    <property type="protein sequence ID" value="ABA61935.1"/>
    <property type="molecule type" value="Genomic_DNA"/>
</dbReference>
<dbReference type="RefSeq" id="YP_635750.1">
    <property type="nucleotide sequence ID" value="NC_008097.1"/>
</dbReference>
<dbReference type="SMR" id="Q1ACJ7"/>
<dbReference type="GeneID" id="4100222"/>
<dbReference type="GO" id="GO:0009535">
    <property type="term" value="C:chloroplast thylakoid membrane"/>
    <property type="evidence" value="ECO:0007669"/>
    <property type="project" value="UniProtKB-SubCell"/>
</dbReference>
<dbReference type="GO" id="GO:0009523">
    <property type="term" value="C:photosystem II"/>
    <property type="evidence" value="ECO:0007669"/>
    <property type="project" value="UniProtKB-KW"/>
</dbReference>
<dbReference type="GO" id="GO:0016168">
    <property type="term" value="F:chlorophyll binding"/>
    <property type="evidence" value="ECO:0007669"/>
    <property type="project" value="UniProtKB-UniRule"/>
</dbReference>
<dbReference type="GO" id="GO:0045156">
    <property type="term" value="F:electron transporter, transferring electrons within the cyclic electron transport pathway of photosynthesis activity"/>
    <property type="evidence" value="ECO:0007669"/>
    <property type="project" value="InterPro"/>
</dbReference>
<dbReference type="GO" id="GO:0005506">
    <property type="term" value="F:iron ion binding"/>
    <property type="evidence" value="ECO:0007669"/>
    <property type="project" value="UniProtKB-UniRule"/>
</dbReference>
<dbReference type="GO" id="GO:0010242">
    <property type="term" value="F:oxygen evolving activity"/>
    <property type="evidence" value="ECO:0007669"/>
    <property type="project" value="UniProtKB-EC"/>
</dbReference>
<dbReference type="GO" id="GO:0009772">
    <property type="term" value="P:photosynthetic electron transport in photosystem II"/>
    <property type="evidence" value="ECO:0007669"/>
    <property type="project" value="InterPro"/>
</dbReference>
<dbReference type="CDD" id="cd09288">
    <property type="entry name" value="Photosystem-II_D2"/>
    <property type="match status" value="1"/>
</dbReference>
<dbReference type="FunFam" id="1.20.85.10:FF:000001">
    <property type="entry name" value="photosystem II D2 protein-like"/>
    <property type="match status" value="1"/>
</dbReference>
<dbReference type="Gene3D" id="1.20.85.10">
    <property type="entry name" value="Photosystem II protein D1-like"/>
    <property type="match status" value="1"/>
</dbReference>
<dbReference type="HAMAP" id="MF_01383">
    <property type="entry name" value="PSII_PsbD_D2"/>
    <property type="match status" value="1"/>
</dbReference>
<dbReference type="InterPro" id="IPR055266">
    <property type="entry name" value="D1/D2"/>
</dbReference>
<dbReference type="InterPro" id="IPR036854">
    <property type="entry name" value="Photo_II_D1/D2_sf"/>
</dbReference>
<dbReference type="InterPro" id="IPR000484">
    <property type="entry name" value="Photo_RC_L/M"/>
</dbReference>
<dbReference type="InterPro" id="IPR055265">
    <property type="entry name" value="Photo_RC_L/M_CS"/>
</dbReference>
<dbReference type="InterPro" id="IPR005868">
    <property type="entry name" value="PSII_PsbD/D2"/>
</dbReference>
<dbReference type="NCBIfam" id="TIGR01152">
    <property type="entry name" value="psbD"/>
    <property type="match status" value="1"/>
</dbReference>
<dbReference type="PANTHER" id="PTHR33149:SF12">
    <property type="entry name" value="PHOTOSYSTEM II D2 PROTEIN"/>
    <property type="match status" value="1"/>
</dbReference>
<dbReference type="PANTHER" id="PTHR33149">
    <property type="entry name" value="PHOTOSYSTEM II PROTEIN D1"/>
    <property type="match status" value="1"/>
</dbReference>
<dbReference type="Pfam" id="PF00124">
    <property type="entry name" value="Photo_RC"/>
    <property type="match status" value="1"/>
</dbReference>
<dbReference type="PRINTS" id="PR00256">
    <property type="entry name" value="REACTNCENTRE"/>
</dbReference>
<dbReference type="SUPFAM" id="SSF81483">
    <property type="entry name" value="Bacterial photosystem II reaction centre, L and M subunits"/>
    <property type="match status" value="1"/>
</dbReference>
<dbReference type="PROSITE" id="PS00244">
    <property type="entry name" value="REACTION_CENTER"/>
    <property type="match status" value="1"/>
</dbReference>
<organism>
    <name type="scientific">Chara vulgaris</name>
    <name type="common">Common stonewort</name>
    <dbReference type="NCBI Taxonomy" id="55564"/>
    <lineage>
        <taxon>Eukaryota</taxon>
        <taxon>Viridiplantae</taxon>
        <taxon>Streptophyta</taxon>
        <taxon>Charophyceae</taxon>
        <taxon>Charales</taxon>
        <taxon>Characeae</taxon>
        <taxon>Chara</taxon>
    </lineage>
</organism>
<geneLocation type="chloroplast"/>
<protein>
    <recommendedName>
        <fullName evidence="2">Photosystem II D2 protein</fullName>
        <shortName evidence="2">PSII D2 protein</shortName>
        <ecNumber evidence="2">1.10.3.9</ecNumber>
    </recommendedName>
    <alternativeName>
        <fullName evidence="2">Photosystem Q(A) protein</fullName>
    </alternativeName>
</protein>
<keyword id="KW-0007">Acetylation</keyword>
<keyword id="KW-0148">Chlorophyll</keyword>
<keyword id="KW-0150">Chloroplast</keyword>
<keyword id="KW-0157">Chromophore</keyword>
<keyword id="KW-0249">Electron transport</keyword>
<keyword id="KW-0408">Iron</keyword>
<keyword id="KW-0460">Magnesium</keyword>
<keyword id="KW-0472">Membrane</keyword>
<keyword id="KW-0479">Metal-binding</keyword>
<keyword id="KW-0560">Oxidoreductase</keyword>
<keyword id="KW-0597">Phosphoprotein</keyword>
<keyword id="KW-0602">Photosynthesis</keyword>
<keyword id="KW-0604">Photosystem II</keyword>
<keyword id="KW-0934">Plastid</keyword>
<keyword id="KW-0793">Thylakoid</keyword>
<keyword id="KW-0812">Transmembrane</keyword>
<keyword id="KW-1133">Transmembrane helix</keyword>
<keyword id="KW-0813">Transport</keyword>
<accession>Q1ACJ7</accession>